<proteinExistence type="inferred from homology"/>
<sequence>MSSSPNSPIACNLPRVTIVGAGRVGSTLAQRVAEKNLADVVLLDIIAGMPQGLALDLMEARGIEIHNRQIIGTNNYADTSGSQIVVITAGLPRKPGMSRDDLLKTNAKIVVEAAKNAIAHSPNAIFIVVTNPLDVMTYLAWQATGLPRDRIMGMAGVLDSARFEAFIALELGVLPADVKAMVLGSHGDLMVPLSRYATVNGIPITELLDAATIERLIERTRNGGAEIVELMQTGGAFFAPASATSVMVESILLNQSRLLPVAAYLQGEYGLEDVVIGVPCRLGCGGIESVLELILSDEEREGLHTSAQSVRQNIERSQEILANKNNS</sequence>
<accession>B2J5F8</accession>
<comment type="function">
    <text evidence="1">Catalyzes the reversible oxidation of malate to oxaloacetate.</text>
</comment>
<comment type="catalytic activity">
    <reaction evidence="1">
        <text>(S)-malate + NAD(+) = oxaloacetate + NADH + H(+)</text>
        <dbReference type="Rhea" id="RHEA:21432"/>
        <dbReference type="ChEBI" id="CHEBI:15378"/>
        <dbReference type="ChEBI" id="CHEBI:15589"/>
        <dbReference type="ChEBI" id="CHEBI:16452"/>
        <dbReference type="ChEBI" id="CHEBI:57540"/>
        <dbReference type="ChEBI" id="CHEBI:57945"/>
        <dbReference type="EC" id="1.1.1.37"/>
    </reaction>
</comment>
<comment type="similarity">
    <text evidence="1">Belongs to the LDH/MDH superfamily. MDH type 3 family.</text>
</comment>
<reference key="1">
    <citation type="journal article" date="2013" name="Plant Physiol.">
        <title>A Nostoc punctiforme Sugar Transporter Necessary to Establish a Cyanobacterium-Plant Symbiosis.</title>
        <authorList>
            <person name="Ekman M."/>
            <person name="Picossi S."/>
            <person name="Campbell E.L."/>
            <person name="Meeks J.C."/>
            <person name="Flores E."/>
        </authorList>
    </citation>
    <scope>NUCLEOTIDE SEQUENCE [LARGE SCALE GENOMIC DNA]</scope>
    <source>
        <strain>ATCC 29133 / PCC 73102</strain>
    </source>
</reference>
<dbReference type="EC" id="1.1.1.37" evidence="1"/>
<dbReference type="EMBL" id="CP001037">
    <property type="protein sequence ID" value="ACC82315.1"/>
    <property type="molecule type" value="Genomic_DNA"/>
</dbReference>
<dbReference type="RefSeq" id="WP_012410283.1">
    <property type="nucleotide sequence ID" value="NC_010628.1"/>
</dbReference>
<dbReference type="SMR" id="B2J5F8"/>
<dbReference type="STRING" id="63737.Npun_R3934"/>
<dbReference type="EnsemblBacteria" id="ACC82315">
    <property type="protein sequence ID" value="ACC82315"/>
    <property type="gene ID" value="Npun_R3934"/>
</dbReference>
<dbReference type="KEGG" id="npu:Npun_R3934"/>
<dbReference type="eggNOG" id="COG0039">
    <property type="taxonomic scope" value="Bacteria"/>
</dbReference>
<dbReference type="HOGENOM" id="CLU_045401_2_1_3"/>
<dbReference type="OrthoDB" id="9802969at2"/>
<dbReference type="PhylomeDB" id="B2J5F8"/>
<dbReference type="Proteomes" id="UP000001191">
    <property type="component" value="Chromosome"/>
</dbReference>
<dbReference type="GO" id="GO:0004459">
    <property type="term" value="F:L-lactate dehydrogenase activity"/>
    <property type="evidence" value="ECO:0007669"/>
    <property type="project" value="TreeGrafter"/>
</dbReference>
<dbReference type="GO" id="GO:0030060">
    <property type="term" value="F:L-malate dehydrogenase (NAD+) activity"/>
    <property type="evidence" value="ECO:0007669"/>
    <property type="project" value="UniProtKB-UniRule"/>
</dbReference>
<dbReference type="GO" id="GO:0006089">
    <property type="term" value="P:lactate metabolic process"/>
    <property type="evidence" value="ECO:0007669"/>
    <property type="project" value="TreeGrafter"/>
</dbReference>
<dbReference type="GO" id="GO:0006099">
    <property type="term" value="P:tricarboxylic acid cycle"/>
    <property type="evidence" value="ECO:0007669"/>
    <property type="project" value="UniProtKB-UniRule"/>
</dbReference>
<dbReference type="CDD" id="cd01339">
    <property type="entry name" value="LDH-like_MDH"/>
    <property type="match status" value="1"/>
</dbReference>
<dbReference type="FunFam" id="3.40.50.720:FF:000018">
    <property type="entry name" value="Malate dehydrogenase"/>
    <property type="match status" value="1"/>
</dbReference>
<dbReference type="FunFam" id="3.90.110.10:FF:000004">
    <property type="entry name" value="Malate dehydrogenase"/>
    <property type="match status" value="1"/>
</dbReference>
<dbReference type="Gene3D" id="3.90.110.10">
    <property type="entry name" value="Lactate dehydrogenase/glycoside hydrolase, family 4, C-terminal"/>
    <property type="match status" value="1"/>
</dbReference>
<dbReference type="Gene3D" id="3.40.50.720">
    <property type="entry name" value="NAD(P)-binding Rossmann-like Domain"/>
    <property type="match status" value="1"/>
</dbReference>
<dbReference type="HAMAP" id="MF_00487">
    <property type="entry name" value="Malate_dehydrog_3"/>
    <property type="match status" value="1"/>
</dbReference>
<dbReference type="InterPro" id="IPR001557">
    <property type="entry name" value="L-lactate/malate_DH"/>
</dbReference>
<dbReference type="InterPro" id="IPR022383">
    <property type="entry name" value="Lactate/malate_DH_C"/>
</dbReference>
<dbReference type="InterPro" id="IPR001236">
    <property type="entry name" value="Lactate/malate_DH_N"/>
</dbReference>
<dbReference type="InterPro" id="IPR015955">
    <property type="entry name" value="Lactate_DH/Glyco_Ohase_4_C"/>
</dbReference>
<dbReference type="InterPro" id="IPR011275">
    <property type="entry name" value="Malate_DH_type3"/>
</dbReference>
<dbReference type="InterPro" id="IPR036291">
    <property type="entry name" value="NAD(P)-bd_dom_sf"/>
</dbReference>
<dbReference type="NCBIfam" id="TIGR01763">
    <property type="entry name" value="MalateDH_bact"/>
    <property type="match status" value="1"/>
</dbReference>
<dbReference type="NCBIfam" id="NF004863">
    <property type="entry name" value="PRK06223.1"/>
    <property type="match status" value="1"/>
</dbReference>
<dbReference type="PANTHER" id="PTHR43128">
    <property type="entry name" value="L-2-HYDROXYCARBOXYLATE DEHYDROGENASE (NAD(P)(+))"/>
    <property type="match status" value="1"/>
</dbReference>
<dbReference type="PANTHER" id="PTHR43128:SF16">
    <property type="entry name" value="L-LACTATE DEHYDROGENASE"/>
    <property type="match status" value="1"/>
</dbReference>
<dbReference type="Pfam" id="PF02866">
    <property type="entry name" value="Ldh_1_C"/>
    <property type="match status" value="1"/>
</dbReference>
<dbReference type="Pfam" id="PF00056">
    <property type="entry name" value="Ldh_1_N"/>
    <property type="match status" value="1"/>
</dbReference>
<dbReference type="PIRSF" id="PIRSF000102">
    <property type="entry name" value="Lac_mal_DH"/>
    <property type="match status" value="1"/>
</dbReference>
<dbReference type="PRINTS" id="PR00086">
    <property type="entry name" value="LLDHDRGNASE"/>
</dbReference>
<dbReference type="SUPFAM" id="SSF56327">
    <property type="entry name" value="LDH C-terminal domain-like"/>
    <property type="match status" value="1"/>
</dbReference>
<dbReference type="SUPFAM" id="SSF51735">
    <property type="entry name" value="NAD(P)-binding Rossmann-fold domains"/>
    <property type="match status" value="1"/>
</dbReference>
<gene>
    <name evidence="1" type="primary">mdh</name>
    <name type="ordered locus">Npun_R3934</name>
</gene>
<evidence type="ECO:0000255" key="1">
    <source>
        <dbReference type="HAMAP-Rule" id="MF_00487"/>
    </source>
</evidence>
<name>MDH_NOSP7</name>
<keyword id="KW-0520">NAD</keyword>
<keyword id="KW-0560">Oxidoreductase</keyword>
<keyword id="KW-1185">Reference proteome</keyword>
<keyword id="KW-0816">Tricarboxylic acid cycle</keyword>
<organism>
    <name type="scientific">Nostoc punctiforme (strain ATCC 29133 / PCC 73102)</name>
    <dbReference type="NCBI Taxonomy" id="63737"/>
    <lineage>
        <taxon>Bacteria</taxon>
        <taxon>Bacillati</taxon>
        <taxon>Cyanobacteriota</taxon>
        <taxon>Cyanophyceae</taxon>
        <taxon>Nostocales</taxon>
        <taxon>Nostocaceae</taxon>
        <taxon>Nostoc</taxon>
    </lineage>
</organism>
<protein>
    <recommendedName>
        <fullName evidence="1">Malate dehydrogenase</fullName>
        <ecNumber evidence="1">1.1.1.37</ecNumber>
    </recommendedName>
</protein>
<feature type="chain" id="PRO_1000126143" description="Malate dehydrogenase">
    <location>
        <begin position="1"/>
        <end position="327"/>
    </location>
</feature>
<feature type="active site" description="Proton acceptor" evidence="1">
    <location>
        <position position="186"/>
    </location>
</feature>
<feature type="binding site" evidence="1">
    <location>
        <begin position="20"/>
        <end position="25"/>
    </location>
    <ligand>
        <name>NAD(+)</name>
        <dbReference type="ChEBI" id="CHEBI:57540"/>
    </ligand>
</feature>
<feature type="binding site" evidence="1">
    <location>
        <position position="44"/>
    </location>
    <ligand>
        <name>NAD(+)</name>
        <dbReference type="ChEBI" id="CHEBI:57540"/>
    </ligand>
</feature>
<feature type="binding site" evidence="1">
    <location>
        <position position="93"/>
    </location>
    <ligand>
        <name>substrate</name>
    </ligand>
</feature>
<feature type="binding site" evidence="1">
    <location>
        <position position="99"/>
    </location>
    <ligand>
        <name>substrate</name>
    </ligand>
</feature>
<feature type="binding site" evidence="1">
    <location>
        <position position="106"/>
    </location>
    <ligand>
        <name>NAD(+)</name>
        <dbReference type="ChEBI" id="CHEBI:57540"/>
    </ligand>
</feature>
<feature type="binding site" evidence="1">
    <location>
        <begin position="129"/>
        <end position="131"/>
    </location>
    <ligand>
        <name>NAD(+)</name>
        <dbReference type="ChEBI" id="CHEBI:57540"/>
    </ligand>
</feature>
<feature type="binding site" evidence="1">
    <location>
        <position position="131"/>
    </location>
    <ligand>
        <name>substrate</name>
    </ligand>
</feature>
<feature type="binding site" evidence="1">
    <location>
        <position position="162"/>
    </location>
    <ligand>
        <name>substrate</name>
    </ligand>
</feature>